<feature type="propeptide" id="PRO_0000005877" evidence="1">
    <location>
        <begin position="1"/>
        <end position="24"/>
    </location>
</feature>
<feature type="peptide" id="PRO_0000005878" description="Competence-stimulating peptide">
    <location>
        <begin position="25"/>
        <end position="41"/>
    </location>
</feature>
<keyword id="KW-0178">Competence</keyword>
<keyword id="KW-0588">Pheromone</keyword>
<keyword id="KW-0964">Secreted</keyword>
<organism>
    <name type="scientific">Streptococcus oralis</name>
    <dbReference type="NCBI Taxonomy" id="1303"/>
    <lineage>
        <taxon>Bacteria</taxon>
        <taxon>Bacillati</taxon>
        <taxon>Bacillota</taxon>
        <taxon>Bacilli</taxon>
        <taxon>Lactobacillales</taxon>
        <taxon>Streptococcaceae</taxon>
        <taxon>Streptococcus</taxon>
    </lineage>
</organism>
<proteinExistence type="inferred from homology"/>
<dbReference type="EMBL" id="AJ000873">
    <property type="protein sequence ID" value="CAA04363.1"/>
    <property type="molecule type" value="Genomic_DNA"/>
</dbReference>
<dbReference type="RefSeq" id="WP_002874960.1">
    <property type="nucleotide sequence ID" value="NZ_RMVJ01000025.1"/>
</dbReference>
<dbReference type="SMR" id="O33689"/>
<dbReference type="GeneID" id="49600699"/>
<dbReference type="GO" id="GO:0005576">
    <property type="term" value="C:extracellular region"/>
    <property type="evidence" value="ECO:0007669"/>
    <property type="project" value="UniProtKB-SubCell"/>
</dbReference>
<dbReference type="GO" id="GO:0005186">
    <property type="term" value="F:pheromone activity"/>
    <property type="evidence" value="ECO:0007669"/>
    <property type="project" value="UniProtKB-KW"/>
</dbReference>
<dbReference type="GO" id="GO:0030420">
    <property type="term" value="P:establishment of competence for transformation"/>
    <property type="evidence" value="ECO:0007669"/>
    <property type="project" value="UniProtKB-KW"/>
</dbReference>
<dbReference type="InterPro" id="IPR010133">
    <property type="entry name" value="Bacteriocin_signal_seq"/>
</dbReference>
<dbReference type="InterPro" id="IPR004288">
    <property type="entry name" value="Competence_ComC"/>
</dbReference>
<dbReference type="NCBIfam" id="TIGR01847">
    <property type="entry name" value="bacteriocin_sig"/>
    <property type="match status" value="1"/>
</dbReference>
<dbReference type="NCBIfam" id="NF033214">
    <property type="entry name" value="ComC_Streptocco"/>
    <property type="match status" value="1"/>
</dbReference>
<dbReference type="Pfam" id="PF03047">
    <property type="entry name" value="ComC"/>
    <property type="match status" value="1"/>
</dbReference>
<name>CSP_STROR</name>
<evidence type="ECO:0000255" key="1"/>
<evidence type="ECO:0000305" key="2"/>
<reference key="1">
    <citation type="journal article" date="1997" name="J. Bacteriol.">
        <title>Natural competence in the genus Streptococcus: evidence that streptococci can change pherotype by interspecies recombinational exchanges.</title>
        <authorList>
            <person name="Haevarstein L.S."/>
            <person name="Hakenbeck R."/>
            <person name="Gaustad P."/>
        </authorList>
    </citation>
    <scope>NUCLEOTIDE SEQUENCE [GENOMIC DNA]</scope>
    <source>
        <strain>ATCC 35037 / CIP 102922 / DSM 20627 / KCTC 13048 / LMG 14532 / NCTC 11427 / PB182</strain>
    </source>
</reference>
<comment type="function">
    <text>Acts as a pheromone, induces cells to develop competence for genetic transformation.</text>
</comment>
<comment type="subcellular location">
    <subcellularLocation>
        <location>Secreted</location>
    </subcellularLocation>
</comment>
<comment type="similarity">
    <text evidence="2">Belongs to the ComC family.</text>
</comment>
<gene>
    <name type="primary">comC</name>
</gene>
<accession>O33689</accession>
<protein>
    <recommendedName>
        <fullName>Competence-stimulating peptide</fullName>
        <shortName>CSP</shortName>
    </recommendedName>
</protein>
<sequence>MKNTEKLEQFKEVTEAELQEIRGGDKRLPYFFKHLFSNRTK</sequence>